<sequence>MKKFMNFFSSNEFLKMIMSTIYLPTPVNINYMWNFGSILGIFLMIQIISGFILSMHYCPNIDIAFWSITNIMKDMNSGWLFRLIHMNGASFYFLMMYIHISRNLFYCSYKLNNVWGIGIMILLMSMAAAFMGYVLPWGQMSYWGATVITNLLSAIPYIGDTIVLWIWGGFSINNATLNRFFSLHFILPLLILFMVILHLFALHLTGSSNPLGSNFNNYKISFHPYFSIKDLLGFYIILFIFMFINFQFPYHLGDPDNFKIANPMNTPTHIKPEWYFLFAYSILRAIPNKLGGVIGLVMSILILYIMIFYNNKMMNNKFNMLNKIYYWMFINNFILLTWLGKQLIEYPFTNINMLFTTTYFLYFFLNFYLSKLWDNLIWNSPLN</sequence>
<evidence type="ECO:0000250" key="1"/>
<evidence type="ECO:0000250" key="2">
    <source>
        <dbReference type="UniProtKB" id="P00157"/>
    </source>
</evidence>
<evidence type="ECO:0000250" key="3">
    <source>
        <dbReference type="UniProtKB" id="P00163"/>
    </source>
</evidence>
<evidence type="ECO:0000255" key="4">
    <source>
        <dbReference type="PROSITE-ProRule" id="PRU00967"/>
    </source>
</evidence>
<evidence type="ECO:0000255" key="5">
    <source>
        <dbReference type="PROSITE-ProRule" id="PRU00968"/>
    </source>
</evidence>
<feature type="chain" id="PRO_0000060606" description="Cytochrome b">
    <location>
        <begin position="1"/>
        <end position="383"/>
    </location>
</feature>
<feature type="transmembrane region" description="Helical" evidence="2">
    <location>
        <begin position="35"/>
        <end position="55"/>
    </location>
</feature>
<feature type="transmembrane region" description="Helical" evidence="2">
    <location>
        <begin position="79"/>
        <end position="100"/>
    </location>
</feature>
<feature type="transmembrane region" description="Helical" evidence="2">
    <location>
        <begin position="115"/>
        <end position="135"/>
    </location>
</feature>
<feature type="transmembrane region" description="Helical" evidence="2">
    <location>
        <begin position="180"/>
        <end position="200"/>
    </location>
</feature>
<feature type="transmembrane region" description="Helical" evidence="2">
    <location>
        <begin position="228"/>
        <end position="248"/>
    </location>
</feature>
<feature type="transmembrane region" description="Helical" evidence="2">
    <location>
        <begin position="290"/>
        <end position="310"/>
    </location>
</feature>
<feature type="transmembrane region" description="Helical" evidence="2">
    <location>
        <begin position="321"/>
        <end position="341"/>
    </location>
</feature>
<feature type="transmembrane region" description="Helical" evidence="2">
    <location>
        <begin position="348"/>
        <end position="368"/>
    </location>
</feature>
<feature type="binding site" description="axial binding residue" evidence="2">
    <location>
        <position position="85"/>
    </location>
    <ligand>
        <name>heme b</name>
        <dbReference type="ChEBI" id="CHEBI:60344"/>
        <label>b562</label>
    </ligand>
    <ligandPart>
        <name>Fe</name>
        <dbReference type="ChEBI" id="CHEBI:18248"/>
    </ligandPart>
</feature>
<feature type="binding site" description="axial binding residue" evidence="2">
    <location>
        <position position="99"/>
    </location>
    <ligand>
        <name>heme b</name>
        <dbReference type="ChEBI" id="CHEBI:60344"/>
        <label>b566</label>
    </ligand>
    <ligandPart>
        <name>Fe</name>
        <dbReference type="ChEBI" id="CHEBI:18248"/>
    </ligandPart>
</feature>
<feature type="binding site" description="axial binding residue" evidence="2">
    <location>
        <position position="184"/>
    </location>
    <ligand>
        <name>heme b</name>
        <dbReference type="ChEBI" id="CHEBI:60344"/>
        <label>b562</label>
    </ligand>
    <ligandPart>
        <name>Fe</name>
        <dbReference type="ChEBI" id="CHEBI:18248"/>
    </ligandPart>
</feature>
<feature type="binding site" description="axial binding residue" evidence="2">
    <location>
        <position position="198"/>
    </location>
    <ligand>
        <name>heme b</name>
        <dbReference type="ChEBI" id="CHEBI:60344"/>
        <label>b566</label>
    </ligand>
    <ligandPart>
        <name>Fe</name>
        <dbReference type="ChEBI" id="CHEBI:18248"/>
    </ligandPart>
</feature>
<feature type="binding site" evidence="2">
    <location>
        <position position="203"/>
    </location>
    <ligand>
        <name>a ubiquinone</name>
        <dbReference type="ChEBI" id="CHEBI:16389"/>
    </ligand>
</feature>
<keyword id="KW-0249">Electron transport</keyword>
<keyword id="KW-0349">Heme</keyword>
<keyword id="KW-0408">Iron</keyword>
<keyword id="KW-0472">Membrane</keyword>
<keyword id="KW-0479">Metal-binding</keyword>
<keyword id="KW-0496">Mitochondrion</keyword>
<keyword id="KW-0999">Mitochondrion inner membrane</keyword>
<keyword id="KW-0679">Respiratory chain</keyword>
<keyword id="KW-0812">Transmembrane</keyword>
<keyword id="KW-1133">Transmembrane helix</keyword>
<keyword id="KW-0813">Transport</keyword>
<keyword id="KW-0830">Ubiquinone</keyword>
<proteinExistence type="inferred from homology"/>
<accession>P34845</accession>
<protein>
    <recommendedName>
        <fullName>Cytochrome b</fullName>
    </recommendedName>
    <alternativeName>
        <fullName>Complex III subunit 3</fullName>
    </alternativeName>
    <alternativeName>
        <fullName>Complex III subunit III</fullName>
    </alternativeName>
    <alternativeName>
        <fullName>Cytochrome b-c1 complex subunit 3</fullName>
    </alternativeName>
    <alternativeName>
        <fullName>Ubiquinol-cytochrome-c reductase complex cytochrome b subunit</fullName>
    </alternativeName>
</protein>
<name>CYB_APILI</name>
<geneLocation type="mitochondrion"/>
<gene>
    <name type="primary">MT-CYB</name>
    <name type="synonym">COB</name>
    <name type="synonym">CYTB</name>
    <name type="synonym">MTCYB</name>
</gene>
<reference key="1">
    <citation type="journal article" date="1992" name="Mol. Biol. Evol.">
        <title>The cytochrome b and ATPase genes of honeybee mitochondrial DNA.</title>
        <authorList>
            <person name="Crozier R.H."/>
            <person name="Crozier Y.C."/>
        </authorList>
    </citation>
    <scope>NUCLEOTIDE SEQUENCE [GENOMIC DNA]</scope>
    <source>
        <tissue>Thorax</tissue>
    </source>
</reference>
<reference key="2">
    <citation type="journal article" date="1993" name="Genetics">
        <title>The mitochondrial genome of the honeybee Apis mellifera: complete sequence and genome organization.</title>
        <authorList>
            <person name="Crozier R.H."/>
            <person name="Crozier Y.C."/>
        </authorList>
    </citation>
    <scope>NUCLEOTIDE SEQUENCE [GENOMIC DNA]</scope>
    <source>
        <tissue>Thorax</tissue>
    </source>
</reference>
<dbReference type="EMBL" id="L06178">
    <property type="protein sequence ID" value="AAB96809.1"/>
    <property type="molecule type" value="Genomic_DNA"/>
</dbReference>
<dbReference type="EMBL" id="M87052">
    <property type="status" value="NOT_ANNOTATED_CDS"/>
    <property type="molecule type" value="Genomic_DNA"/>
</dbReference>
<dbReference type="PIR" id="C42622">
    <property type="entry name" value="C42622"/>
</dbReference>
<dbReference type="RefSeq" id="NP_008093.1">
    <property type="nucleotide sequence ID" value="NC_001566.1"/>
</dbReference>
<dbReference type="SMR" id="P34845"/>
<dbReference type="GeneID" id="807693"/>
<dbReference type="CTD" id="4519"/>
<dbReference type="GO" id="GO:0005743">
    <property type="term" value="C:mitochondrial inner membrane"/>
    <property type="evidence" value="ECO:0007669"/>
    <property type="project" value="UniProtKB-SubCell"/>
</dbReference>
<dbReference type="GO" id="GO:0045275">
    <property type="term" value="C:respiratory chain complex III"/>
    <property type="evidence" value="ECO:0007669"/>
    <property type="project" value="InterPro"/>
</dbReference>
<dbReference type="GO" id="GO:0046872">
    <property type="term" value="F:metal ion binding"/>
    <property type="evidence" value="ECO:0007669"/>
    <property type="project" value="UniProtKB-KW"/>
</dbReference>
<dbReference type="GO" id="GO:0008121">
    <property type="term" value="F:ubiquinol-cytochrome-c reductase activity"/>
    <property type="evidence" value="ECO:0007669"/>
    <property type="project" value="InterPro"/>
</dbReference>
<dbReference type="GO" id="GO:0006122">
    <property type="term" value="P:mitochondrial electron transport, ubiquinol to cytochrome c"/>
    <property type="evidence" value="ECO:0007669"/>
    <property type="project" value="TreeGrafter"/>
</dbReference>
<dbReference type="CDD" id="cd00290">
    <property type="entry name" value="cytochrome_b_C"/>
    <property type="match status" value="1"/>
</dbReference>
<dbReference type="CDD" id="cd00284">
    <property type="entry name" value="Cytochrome_b_N"/>
    <property type="match status" value="1"/>
</dbReference>
<dbReference type="Gene3D" id="1.20.810.10">
    <property type="entry name" value="Cytochrome Bc1 Complex, Chain C"/>
    <property type="match status" value="1"/>
</dbReference>
<dbReference type="InterPro" id="IPR005798">
    <property type="entry name" value="Cyt_b/b6_C"/>
</dbReference>
<dbReference type="InterPro" id="IPR036150">
    <property type="entry name" value="Cyt_b/b6_C_sf"/>
</dbReference>
<dbReference type="InterPro" id="IPR005797">
    <property type="entry name" value="Cyt_b/b6_N"/>
</dbReference>
<dbReference type="InterPro" id="IPR027387">
    <property type="entry name" value="Cytb/b6-like_sf"/>
</dbReference>
<dbReference type="InterPro" id="IPR030689">
    <property type="entry name" value="Cytochrome_b"/>
</dbReference>
<dbReference type="InterPro" id="IPR048260">
    <property type="entry name" value="Cytochrome_b_C_euk/bac"/>
</dbReference>
<dbReference type="InterPro" id="IPR048259">
    <property type="entry name" value="Cytochrome_b_N_euk/bac"/>
</dbReference>
<dbReference type="InterPro" id="IPR016174">
    <property type="entry name" value="Di-haem_cyt_TM"/>
</dbReference>
<dbReference type="PANTHER" id="PTHR19271">
    <property type="entry name" value="CYTOCHROME B"/>
    <property type="match status" value="1"/>
</dbReference>
<dbReference type="PANTHER" id="PTHR19271:SF16">
    <property type="entry name" value="CYTOCHROME B"/>
    <property type="match status" value="1"/>
</dbReference>
<dbReference type="Pfam" id="PF00032">
    <property type="entry name" value="Cytochrom_B_C"/>
    <property type="match status" value="1"/>
</dbReference>
<dbReference type="Pfam" id="PF00033">
    <property type="entry name" value="Cytochrome_B"/>
    <property type="match status" value="1"/>
</dbReference>
<dbReference type="PIRSF" id="PIRSF038885">
    <property type="entry name" value="COB"/>
    <property type="match status" value="1"/>
</dbReference>
<dbReference type="SUPFAM" id="SSF81648">
    <property type="entry name" value="a domain/subunit of cytochrome bc1 complex (Ubiquinol-cytochrome c reductase)"/>
    <property type="match status" value="1"/>
</dbReference>
<dbReference type="SUPFAM" id="SSF81342">
    <property type="entry name" value="Transmembrane di-heme cytochromes"/>
    <property type="match status" value="1"/>
</dbReference>
<dbReference type="PROSITE" id="PS51003">
    <property type="entry name" value="CYTB_CTER"/>
    <property type="match status" value="1"/>
</dbReference>
<dbReference type="PROSITE" id="PS51002">
    <property type="entry name" value="CYTB_NTER"/>
    <property type="match status" value="1"/>
</dbReference>
<comment type="function">
    <text evidence="2">Component of the ubiquinol-cytochrome c reductase complex (complex III or cytochrome b-c1 complex) that is part of the mitochondrial respiratory chain. The b-c1 complex mediates electron transfer from ubiquinol to cytochrome c. Contributes to the generation of a proton gradient across the mitochondrial membrane that is then used for ATP synthesis.</text>
</comment>
<comment type="cofactor">
    <cofactor evidence="2">
        <name>heme b</name>
        <dbReference type="ChEBI" id="CHEBI:60344"/>
    </cofactor>
    <text evidence="2">Binds 2 heme b groups non-covalently.</text>
</comment>
<comment type="subunit">
    <text evidence="2">The main subunits of complex b-c1 are: cytochrome b, cytochrome c1 and the Rieske protein.</text>
</comment>
<comment type="subcellular location">
    <subcellularLocation>
        <location evidence="3">Mitochondrion inner membrane</location>
        <topology evidence="3">Multi-pass membrane protein</topology>
    </subcellularLocation>
</comment>
<comment type="miscellaneous">
    <text evidence="1">Heme 1 (or BL or b562) is low-potential and absorbs at about 562 nm, and heme 2 (or BH or b566) is high-potential and absorbs at about 566 nm.</text>
</comment>
<comment type="similarity">
    <text evidence="4 5">Belongs to the cytochrome b family.</text>
</comment>
<comment type="caution">
    <text evidence="2">The full-length protein contains only eight transmembrane helices, not nine as predicted by bioinformatics tools.</text>
</comment>
<organism>
    <name type="scientific">Apis mellifera ligustica</name>
    <name type="common">Common honeybee</name>
    <name type="synonym">Italian honeybee</name>
    <dbReference type="NCBI Taxonomy" id="7469"/>
    <lineage>
        <taxon>Eukaryota</taxon>
        <taxon>Metazoa</taxon>
        <taxon>Ecdysozoa</taxon>
        <taxon>Arthropoda</taxon>
        <taxon>Hexapoda</taxon>
        <taxon>Insecta</taxon>
        <taxon>Pterygota</taxon>
        <taxon>Neoptera</taxon>
        <taxon>Endopterygota</taxon>
        <taxon>Hymenoptera</taxon>
        <taxon>Apocrita</taxon>
        <taxon>Aculeata</taxon>
        <taxon>Apoidea</taxon>
        <taxon>Anthophila</taxon>
        <taxon>Apidae</taxon>
        <taxon>Apis</taxon>
    </lineage>
</organism>